<evidence type="ECO:0000255" key="1">
    <source>
        <dbReference type="HAMAP-Rule" id="MF_01566"/>
    </source>
</evidence>
<evidence type="ECO:0000256" key="2">
    <source>
        <dbReference type="SAM" id="MobiDB-lite"/>
    </source>
</evidence>
<organism>
    <name type="scientific">Salmonella typhi</name>
    <dbReference type="NCBI Taxonomy" id="90370"/>
    <lineage>
        <taxon>Bacteria</taxon>
        <taxon>Pseudomonadati</taxon>
        <taxon>Pseudomonadota</taxon>
        <taxon>Gammaproteobacteria</taxon>
        <taxon>Enterobacterales</taxon>
        <taxon>Enterobacteriaceae</taxon>
        <taxon>Salmonella</taxon>
    </lineage>
</organism>
<dbReference type="EMBL" id="AL513382">
    <property type="protein sequence ID" value="CAD02684.1"/>
    <property type="molecule type" value="Genomic_DNA"/>
</dbReference>
<dbReference type="EMBL" id="AE014613">
    <property type="protein sequence ID" value="AAO68093.1"/>
    <property type="molecule type" value="Genomic_DNA"/>
</dbReference>
<dbReference type="RefSeq" id="NP_457018.1">
    <property type="nucleotide sequence ID" value="NC_003198.1"/>
</dbReference>
<dbReference type="RefSeq" id="WP_000383839.1">
    <property type="nucleotide sequence ID" value="NZ_WSUR01000007.1"/>
</dbReference>
<dbReference type="SMR" id="Q8XF02"/>
<dbReference type="STRING" id="220341.gene:17586618"/>
<dbReference type="KEGG" id="stt:t0375"/>
<dbReference type="KEGG" id="sty:STY2722"/>
<dbReference type="PATRIC" id="fig|220341.7.peg.2760"/>
<dbReference type="eggNOG" id="ENOG5032YJI">
    <property type="taxonomic scope" value="Bacteria"/>
</dbReference>
<dbReference type="HOGENOM" id="CLU_198936_0_0_6"/>
<dbReference type="OMA" id="DDWPQKK"/>
<dbReference type="Proteomes" id="UP000000541">
    <property type="component" value="Chromosome"/>
</dbReference>
<dbReference type="Proteomes" id="UP000002670">
    <property type="component" value="Chromosome"/>
</dbReference>
<dbReference type="GO" id="GO:0005886">
    <property type="term" value="C:plasma membrane"/>
    <property type="evidence" value="ECO:0007669"/>
    <property type="project" value="UniProtKB-SubCell"/>
</dbReference>
<dbReference type="HAMAP" id="MF_01566">
    <property type="entry name" value="UPF0370"/>
    <property type="match status" value="1"/>
</dbReference>
<dbReference type="InterPro" id="IPR020910">
    <property type="entry name" value="UPF0370"/>
</dbReference>
<dbReference type="NCBIfam" id="NF010185">
    <property type="entry name" value="PRK13664.1"/>
    <property type="match status" value="1"/>
</dbReference>
<dbReference type="Pfam" id="PF13980">
    <property type="entry name" value="UPF0370"/>
    <property type="match status" value="1"/>
</dbReference>
<gene>
    <name evidence="1" type="primary">ypfN</name>
    <name type="ordered locus">STY2722</name>
    <name type="ordered locus">t0375</name>
</gene>
<sequence>MDWLAKYWWILVLVFLVGVLLNVIKDLKRIDHKKFLANKPELPPHRDFNDKWDDEDDWPKKDQPKK</sequence>
<proteinExistence type="inferred from homology"/>
<protein>
    <recommendedName>
        <fullName evidence="1">UPF0370 protein YpfN</fullName>
    </recommendedName>
</protein>
<reference key="1">
    <citation type="journal article" date="2001" name="Nature">
        <title>Complete genome sequence of a multiple drug resistant Salmonella enterica serovar Typhi CT18.</title>
        <authorList>
            <person name="Parkhill J."/>
            <person name="Dougan G."/>
            <person name="James K.D."/>
            <person name="Thomson N.R."/>
            <person name="Pickard D."/>
            <person name="Wain J."/>
            <person name="Churcher C.M."/>
            <person name="Mungall K.L."/>
            <person name="Bentley S.D."/>
            <person name="Holden M.T.G."/>
            <person name="Sebaihia M."/>
            <person name="Baker S."/>
            <person name="Basham D."/>
            <person name="Brooks K."/>
            <person name="Chillingworth T."/>
            <person name="Connerton P."/>
            <person name="Cronin A."/>
            <person name="Davis P."/>
            <person name="Davies R.M."/>
            <person name="Dowd L."/>
            <person name="White N."/>
            <person name="Farrar J."/>
            <person name="Feltwell T."/>
            <person name="Hamlin N."/>
            <person name="Haque A."/>
            <person name="Hien T.T."/>
            <person name="Holroyd S."/>
            <person name="Jagels K."/>
            <person name="Krogh A."/>
            <person name="Larsen T.S."/>
            <person name="Leather S."/>
            <person name="Moule S."/>
            <person name="O'Gaora P."/>
            <person name="Parry C."/>
            <person name="Quail M.A."/>
            <person name="Rutherford K.M."/>
            <person name="Simmonds M."/>
            <person name="Skelton J."/>
            <person name="Stevens K."/>
            <person name="Whitehead S."/>
            <person name="Barrell B.G."/>
        </authorList>
    </citation>
    <scope>NUCLEOTIDE SEQUENCE [LARGE SCALE GENOMIC DNA]</scope>
    <source>
        <strain>CT18</strain>
    </source>
</reference>
<reference key="2">
    <citation type="journal article" date="2003" name="J. Bacteriol.">
        <title>Comparative genomics of Salmonella enterica serovar Typhi strains Ty2 and CT18.</title>
        <authorList>
            <person name="Deng W."/>
            <person name="Liou S.-R."/>
            <person name="Plunkett G. III"/>
            <person name="Mayhew G.F."/>
            <person name="Rose D.J."/>
            <person name="Burland V."/>
            <person name="Kodoyianni V."/>
            <person name="Schwartz D.C."/>
            <person name="Blattner F.R."/>
        </authorList>
    </citation>
    <scope>NUCLEOTIDE SEQUENCE [LARGE SCALE GENOMIC DNA]</scope>
    <source>
        <strain>ATCC 700931 / Ty2</strain>
    </source>
</reference>
<comment type="subcellular location">
    <subcellularLocation>
        <location evidence="1">Cell membrane</location>
        <topology evidence="1">Single-pass membrane protein</topology>
    </subcellularLocation>
</comment>
<comment type="similarity">
    <text evidence="1">Belongs to the UPF0370 family.</text>
</comment>
<name>YPFN_SALTI</name>
<feature type="chain" id="PRO_0000244548" description="UPF0370 protein YpfN">
    <location>
        <begin position="1"/>
        <end position="66"/>
    </location>
</feature>
<feature type="transmembrane region" description="Helical" evidence="1">
    <location>
        <begin position="4"/>
        <end position="24"/>
    </location>
</feature>
<feature type="region of interest" description="Disordered" evidence="2">
    <location>
        <begin position="39"/>
        <end position="66"/>
    </location>
</feature>
<feature type="compositionally biased region" description="Basic and acidic residues" evidence="2">
    <location>
        <begin position="42"/>
        <end position="51"/>
    </location>
</feature>
<keyword id="KW-1003">Cell membrane</keyword>
<keyword id="KW-0472">Membrane</keyword>
<keyword id="KW-0812">Transmembrane</keyword>
<keyword id="KW-1133">Transmembrane helix</keyword>
<accession>Q8XF02</accession>
<accession>Q7AMJ1</accession>